<organism>
    <name type="scientific">Kluyveromyces lactis (strain ATCC 8585 / CBS 2359 / DSM 70799 / NBRC 1267 / NRRL Y-1140 / WM37)</name>
    <name type="common">Yeast</name>
    <name type="synonym">Candida sphaerica</name>
    <dbReference type="NCBI Taxonomy" id="284590"/>
    <lineage>
        <taxon>Eukaryota</taxon>
        <taxon>Fungi</taxon>
        <taxon>Dikarya</taxon>
        <taxon>Ascomycota</taxon>
        <taxon>Saccharomycotina</taxon>
        <taxon>Saccharomycetes</taxon>
        <taxon>Saccharomycetales</taxon>
        <taxon>Saccharomycetaceae</taxon>
        <taxon>Kluyveromyces</taxon>
    </lineage>
</organism>
<proteinExistence type="predicted"/>
<accession>P05475</accession>
<geneLocation type="plasmid">
    <name>pGKl-2</name>
</geneLocation>
<feature type="chain" id="PRO_0000066282" description="Uncharacterized killer plasmid pGKl-2 protein 9">
    <location>
        <begin position="1"/>
        <end position="453"/>
    </location>
</feature>
<feature type="sequence conflict" description="In Ref. 2; CAA30768." evidence="1" ref="2">
    <original>FI</original>
    <variation>LK</variation>
    <location>
        <begin position="289"/>
        <end position="290"/>
    </location>
</feature>
<feature type="sequence conflict" description="In Ref. 2; CAA30768." evidence="1" ref="2">
    <original>N</original>
    <variation>F</variation>
    <location>
        <position position="296"/>
    </location>
</feature>
<protein>
    <recommendedName>
        <fullName>Uncharacterized killer plasmid pGKl-2 protein 9</fullName>
    </recommendedName>
</protein>
<sequence>MEIIEHKVEFKYKSIDEYQWTDNFKLDKQWEILRFKKNKIVQKSYMNRFPYSEPKKDYSIALYSKNKWYCLKDGVGSYISIQKEKPQIKDLTITEIKYEPYLVIYKLDFEYHIMMTILHCDERVKLLEYKRPFLKEGIILFNEMKIYVYNGLFSYKGNKIEDFELFVNEFNSQYKENYDRLFKIFGKSNHTHKSIDYKTWCKAKRENQQEWPLFTNIKIKDSIEFPNNSGIYYYYPDKYVGLARRNDDNLIPLIPKIYRKNHYENKNSLLYKYVNGLPIDEEENIPYSFIKEKYKNIKYHEDEKIIEVDYNNNVVKQKDMAEYYCYNNKLIQKIEEPVKLPKIEAQILNKRNERVEVLIDNEWKNLAGNRIDGIPTLPWNYKHIIHDYNKLGRLKKGKIMDLTHIGIVNENGTDIITWPYTDDLYIGRSIETKRLITFKYQKNVEIYDKLIDM</sequence>
<dbReference type="EMBL" id="X07776">
    <property type="protein sequence ID" value="CAA30609.1"/>
    <property type="molecule type" value="Genomic_DNA"/>
</dbReference>
<dbReference type="EMBL" id="X07946">
    <property type="protein sequence ID" value="CAA30768.1"/>
    <property type="molecule type" value="Genomic_DNA"/>
</dbReference>
<dbReference type="PIR" id="S00967">
    <property type="entry name" value="S00967"/>
</dbReference>
<dbReference type="PIR" id="S10337">
    <property type="entry name" value="S10337"/>
</dbReference>
<dbReference type="PaxDb" id="284590-P05475"/>
<dbReference type="InParanoid" id="P05475"/>
<dbReference type="InterPro" id="IPR035143">
    <property type="entry name" value="DUF5483"/>
</dbReference>
<dbReference type="Pfam" id="PF17581">
    <property type="entry name" value="DUF5483"/>
    <property type="match status" value="1"/>
</dbReference>
<name>YKP9_KLULA</name>
<comment type="function">
    <text>The presence of the two linear plasmids, termed pGKL1 and pGKL2, in strains of Kluyveromyces lactis confers the killer phenotype to the host cell, by promoting the secretion of a toxin able to inhibit the growth of sensitive strains.</text>
</comment>
<evidence type="ECO:0000305" key="1"/>
<keyword id="KW-0614">Plasmid</keyword>
<reference key="1">
    <citation type="journal article" date="1988" name="Nucleic Acids Res.">
        <title>Genome organization of the killer plasmid pGKL2 from Kluyveromyces lactis.</title>
        <authorList>
            <person name="Tommasino M."/>
            <person name="Ricci S."/>
            <person name="Galeotti C.L."/>
        </authorList>
    </citation>
    <scope>NUCLEOTIDE SEQUENCE [GENOMIC DNA]</scope>
    <source>
        <strain>ATCC 8585 / CBS 2359 / DSM 70799 / NBRC 1267 / NRRL Y-1140 / WM37</strain>
    </source>
</reference>
<reference key="2">
    <citation type="journal article" date="1988" name="Nucleic Acids Res.">
        <title>Extranuclear gene expression in yeast: evidence for a plasmid-encoded RNA polymerase of unique structure.</title>
        <authorList>
            <person name="Wilson D.W."/>
            <person name="Meacock P.A."/>
        </authorList>
    </citation>
    <scope>NUCLEOTIDE SEQUENCE [GENOMIC DNA]</scope>
    <source>
        <strain>ATCC 8585 / CBS 2359 / DSM 70799 / NBRC 1267 / NRRL Y-1140 / WM37</strain>
    </source>
</reference>